<organism>
    <name type="scientific">Zygosaccharomyces rouxii (strain ATCC 2623 / CBS 732 / NBRC 1130 / NCYC 568 / NRRL Y-229)</name>
    <dbReference type="NCBI Taxonomy" id="559307"/>
    <lineage>
        <taxon>Eukaryota</taxon>
        <taxon>Fungi</taxon>
        <taxon>Dikarya</taxon>
        <taxon>Ascomycota</taxon>
        <taxon>Saccharomycotina</taxon>
        <taxon>Saccharomycetes</taxon>
        <taxon>Saccharomycetales</taxon>
        <taxon>Saccharomycetaceae</taxon>
        <taxon>Zygosaccharomyces</taxon>
    </lineage>
</organism>
<gene>
    <name type="primary">MIC27</name>
    <name type="ordered locus">ZYRO0B09526g</name>
</gene>
<reference key="1">
    <citation type="journal article" date="2009" name="Genome Res.">
        <title>Comparative genomics of protoploid Saccharomycetaceae.</title>
        <authorList>
            <consortium name="The Genolevures Consortium"/>
            <person name="Souciet J.-L."/>
            <person name="Dujon B."/>
            <person name="Gaillardin C."/>
            <person name="Johnston M."/>
            <person name="Baret P.V."/>
            <person name="Cliften P."/>
            <person name="Sherman D.J."/>
            <person name="Weissenbach J."/>
            <person name="Westhof E."/>
            <person name="Wincker P."/>
            <person name="Jubin C."/>
            <person name="Poulain J."/>
            <person name="Barbe V."/>
            <person name="Segurens B."/>
            <person name="Artiguenave F."/>
            <person name="Anthouard V."/>
            <person name="Vacherie B."/>
            <person name="Val M.-E."/>
            <person name="Fulton R.S."/>
            <person name="Minx P."/>
            <person name="Wilson R."/>
            <person name="Durrens P."/>
            <person name="Jean G."/>
            <person name="Marck C."/>
            <person name="Martin T."/>
            <person name="Nikolski M."/>
            <person name="Rolland T."/>
            <person name="Seret M.-L."/>
            <person name="Casaregola S."/>
            <person name="Despons L."/>
            <person name="Fairhead C."/>
            <person name="Fischer G."/>
            <person name="Lafontaine I."/>
            <person name="Leh V."/>
            <person name="Lemaire M."/>
            <person name="de Montigny J."/>
            <person name="Neuveglise C."/>
            <person name="Thierry A."/>
            <person name="Blanc-Lenfle I."/>
            <person name="Bleykasten C."/>
            <person name="Diffels J."/>
            <person name="Fritsch E."/>
            <person name="Frangeul L."/>
            <person name="Goeffon A."/>
            <person name="Jauniaux N."/>
            <person name="Kachouri-Lafond R."/>
            <person name="Payen C."/>
            <person name="Potier S."/>
            <person name="Pribylova L."/>
            <person name="Ozanne C."/>
            <person name="Richard G.-F."/>
            <person name="Sacerdot C."/>
            <person name="Straub M.-L."/>
            <person name="Talla E."/>
        </authorList>
    </citation>
    <scope>NUCLEOTIDE SEQUENCE [LARGE SCALE GENOMIC DNA]</scope>
    <source>
        <strain>ATCC 2623 / CBS 732 / BCRC 21506 / NBRC 1130 / NCYC 568 / NRRL Y-229</strain>
    </source>
</reference>
<proteinExistence type="inferred from homology"/>
<dbReference type="EMBL" id="CU928174">
    <property type="protein sequence ID" value="CAR26430.1"/>
    <property type="molecule type" value="Genomic_DNA"/>
</dbReference>
<dbReference type="RefSeq" id="XP_002495363.1">
    <property type="nucleotide sequence ID" value="XM_002495318.1"/>
</dbReference>
<dbReference type="SMR" id="C5DRL9"/>
<dbReference type="FunCoup" id="C5DRL9">
    <property type="interactions" value="56"/>
</dbReference>
<dbReference type="STRING" id="559307.C5DRL9"/>
<dbReference type="GeneID" id="8202517"/>
<dbReference type="KEGG" id="zro:ZYRO0B09526g"/>
<dbReference type="HOGENOM" id="CLU_093584_0_0_1"/>
<dbReference type="InParanoid" id="C5DRL9"/>
<dbReference type="Proteomes" id="UP000008536">
    <property type="component" value="Chromosome B"/>
</dbReference>
<dbReference type="GO" id="GO:0005743">
    <property type="term" value="C:mitochondrial inner membrane"/>
    <property type="evidence" value="ECO:0007669"/>
    <property type="project" value="UniProtKB-SubCell"/>
</dbReference>
<keyword id="KW-0472">Membrane</keyword>
<keyword id="KW-0496">Mitochondrion</keyword>
<keyword id="KW-0999">Mitochondrion inner membrane</keyword>
<keyword id="KW-1185">Reference proteome</keyword>
<keyword id="KW-0812">Transmembrane</keyword>
<keyword id="KW-1133">Transmembrane helix</keyword>
<protein>
    <recommendedName>
        <fullName>MICOS complex subunit MIC27</fullName>
    </recommendedName>
</protein>
<comment type="function">
    <text evidence="1">Component of the MICOS complex, a large protein complex of the mitochondrial inner membrane that plays crucial roles in the maintenance of crista junctions, inner membrane architecture, and formation of contact sites to the outer membrane.</text>
</comment>
<comment type="subunit">
    <text evidence="1">Component of the mitochondrial contact site and cristae organizing system (MICOS) complex.</text>
</comment>
<comment type="subcellular location">
    <subcellularLocation>
        <location evidence="1">Mitochondrion inner membrane</location>
        <topology evidence="4">Multi-pass membrane protein</topology>
    </subcellularLocation>
</comment>
<comment type="similarity">
    <text evidence="4">Belongs to the apolipoprotein O/MICOS complex subunit Mic27 family.</text>
</comment>
<name>MIC27_ZYGRC</name>
<accession>C5DRL9</accession>
<feature type="chain" id="PRO_0000399841" description="MICOS complex subunit MIC27">
    <location>
        <begin position="1"/>
        <end position="233"/>
    </location>
</feature>
<feature type="topological domain" description="Mitochondrial intermembrane" evidence="2">
    <location>
        <begin position="1"/>
        <end position="98"/>
    </location>
</feature>
<feature type="transmembrane region" description="Helical" evidence="2">
    <location>
        <begin position="99"/>
        <end position="117"/>
    </location>
</feature>
<feature type="topological domain" description="Mitochondrial matrix" evidence="2">
    <location>
        <begin position="118"/>
        <end position="138"/>
    </location>
</feature>
<feature type="transmembrane region" description="Helical" evidence="2">
    <location>
        <begin position="139"/>
        <end position="158"/>
    </location>
</feature>
<feature type="topological domain" description="Mitochondrial intermembrane" evidence="2">
    <location>
        <begin position="159"/>
        <end position="233"/>
    </location>
</feature>
<feature type="region of interest" description="Disordered" evidence="3">
    <location>
        <begin position="1"/>
        <end position="26"/>
    </location>
</feature>
<feature type="compositionally biased region" description="Polar residues" evidence="3">
    <location>
        <begin position="1"/>
        <end position="11"/>
    </location>
</feature>
<feature type="compositionally biased region" description="Basic and acidic residues" evidence="3">
    <location>
        <begin position="13"/>
        <end position="24"/>
    </location>
</feature>
<sequence>MSKFFYSSPNELDTEHQNENHNNQEPRLQSELLSTGNQVVQSPPLTERLHEWRNLLIHQYNVVVAEWSNLKSATKNEIDSGREYINRNVLNDPQENNRLLVPSSILSLGAFFCGRVLTNKNNWGYRSIVNRNPSILGRLLTSLPSRTVLPLALAGVVFNQLTPGTAKNACHTFERDFLSESFVQEYHRIWDQLYVQGIKQGSGQIGETFQNSLQNGIKSIRESISAINDDKKQ</sequence>
<evidence type="ECO:0000250" key="1"/>
<evidence type="ECO:0000255" key="2"/>
<evidence type="ECO:0000256" key="3">
    <source>
        <dbReference type="SAM" id="MobiDB-lite"/>
    </source>
</evidence>
<evidence type="ECO:0000305" key="4"/>